<sequence>MRADWIAKRRGQANVSQMHYARSGVVTEEMAFVAARERLEPELVRAEVARGRMVIPANVRHPELEPLAIGITACCKINANIGNSAVTSNIDEELAKLRVCLKYGADTVMDLSTGGDIPQIREAILRASPIPVGTVPIYECLAHVKDVADLTPELMLEIIEAQAAQGVDYMTIHAGVLRDFIPLAAHRITGIVSRGGALMAQWMLANKAENPFFTHFEQICEIFKRYDVTFSLGDGLRPGCLADASDAAQFAELKALGDLTRKAWEHGVQVMVEGPGHVPLDQIPMNMEKERELCSEAPFYVLGPLVTDIAPGYDHITSAIGAAVAAQHGAAMLCYVTPAEHLGLPDIDDVREGIVAYKIAAHAADVARHRPGARDRDDALSRARYAFDWNKQFELSLDPDTARAKHDETLPHEAFKSAEFCSMCGPKFCSMKIHGHLAEAAAAQDAAANGAAGKPAGGLQVLP</sequence>
<evidence type="ECO:0000255" key="1">
    <source>
        <dbReference type="HAMAP-Rule" id="MF_00089"/>
    </source>
</evidence>
<accession>B4UDM7</accession>
<feature type="chain" id="PRO_1000093188" description="Phosphomethylpyrimidine synthase">
    <location>
        <begin position="1"/>
        <end position="463"/>
    </location>
</feature>
<feature type="binding site" evidence="1">
    <location>
        <position position="80"/>
    </location>
    <ligand>
        <name>substrate</name>
    </ligand>
</feature>
<feature type="binding site" evidence="1">
    <location>
        <position position="109"/>
    </location>
    <ligand>
        <name>substrate</name>
    </ligand>
</feature>
<feature type="binding site" evidence="1">
    <location>
        <position position="138"/>
    </location>
    <ligand>
        <name>substrate</name>
    </ligand>
</feature>
<feature type="binding site" evidence="1">
    <location>
        <position position="173"/>
    </location>
    <ligand>
        <name>substrate</name>
    </ligand>
</feature>
<feature type="binding site" evidence="1">
    <location>
        <begin position="193"/>
        <end position="195"/>
    </location>
    <ligand>
        <name>substrate</name>
    </ligand>
</feature>
<feature type="binding site" evidence="1">
    <location>
        <begin position="234"/>
        <end position="237"/>
    </location>
    <ligand>
        <name>substrate</name>
    </ligand>
</feature>
<feature type="binding site" evidence="1">
    <location>
        <position position="273"/>
    </location>
    <ligand>
        <name>substrate</name>
    </ligand>
</feature>
<feature type="binding site" evidence="1">
    <location>
        <position position="277"/>
    </location>
    <ligand>
        <name>Zn(2+)</name>
        <dbReference type="ChEBI" id="CHEBI:29105"/>
    </ligand>
</feature>
<feature type="binding site" evidence="1">
    <location>
        <position position="300"/>
    </location>
    <ligand>
        <name>substrate</name>
    </ligand>
</feature>
<feature type="binding site" evidence="1">
    <location>
        <position position="341"/>
    </location>
    <ligand>
        <name>Zn(2+)</name>
        <dbReference type="ChEBI" id="CHEBI:29105"/>
    </ligand>
</feature>
<feature type="binding site" evidence="1">
    <location>
        <position position="421"/>
    </location>
    <ligand>
        <name>[4Fe-4S] cluster</name>
        <dbReference type="ChEBI" id="CHEBI:49883"/>
        <note>4Fe-4S-S-AdoMet</note>
    </ligand>
</feature>
<feature type="binding site" evidence="1">
    <location>
        <position position="424"/>
    </location>
    <ligand>
        <name>[4Fe-4S] cluster</name>
        <dbReference type="ChEBI" id="CHEBI:49883"/>
        <note>4Fe-4S-S-AdoMet</note>
    </ligand>
</feature>
<feature type="binding site" evidence="1">
    <location>
        <position position="429"/>
    </location>
    <ligand>
        <name>[4Fe-4S] cluster</name>
        <dbReference type="ChEBI" id="CHEBI:49883"/>
        <note>4Fe-4S-S-AdoMet</note>
    </ligand>
</feature>
<reference key="1">
    <citation type="submission" date="2008-08" db="EMBL/GenBank/DDBJ databases">
        <title>Complete sequence of Anaeromyxobacter sp. K.</title>
        <authorList>
            <consortium name="US DOE Joint Genome Institute"/>
            <person name="Lucas S."/>
            <person name="Copeland A."/>
            <person name="Lapidus A."/>
            <person name="Glavina del Rio T."/>
            <person name="Dalin E."/>
            <person name="Tice H."/>
            <person name="Bruce D."/>
            <person name="Goodwin L."/>
            <person name="Pitluck S."/>
            <person name="Saunders E."/>
            <person name="Brettin T."/>
            <person name="Detter J.C."/>
            <person name="Han C."/>
            <person name="Larimer F."/>
            <person name="Land M."/>
            <person name="Hauser L."/>
            <person name="Kyrpides N."/>
            <person name="Ovchinnikiva G."/>
            <person name="Beliaev A."/>
        </authorList>
    </citation>
    <scope>NUCLEOTIDE SEQUENCE [LARGE SCALE GENOMIC DNA]</scope>
    <source>
        <strain>K</strain>
    </source>
</reference>
<gene>
    <name evidence="1" type="primary">thiC</name>
    <name type="ordered locus">AnaeK_2216</name>
</gene>
<keyword id="KW-0004">4Fe-4S</keyword>
<keyword id="KW-0408">Iron</keyword>
<keyword id="KW-0411">Iron-sulfur</keyword>
<keyword id="KW-0456">Lyase</keyword>
<keyword id="KW-0479">Metal-binding</keyword>
<keyword id="KW-0949">S-adenosyl-L-methionine</keyword>
<keyword id="KW-0784">Thiamine biosynthesis</keyword>
<keyword id="KW-0862">Zinc</keyword>
<comment type="function">
    <text evidence="1">Catalyzes the synthesis of the hydroxymethylpyrimidine phosphate (HMP-P) moiety of thiamine from aminoimidazole ribotide (AIR) in a radical S-adenosyl-L-methionine (SAM)-dependent reaction.</text>
</comment>
<comment type="catalytic activity">
    <reaction evidence="1">
        <text>5-amino-1-(5-phospho-beta-D-ribosyl)imidazole + S-adenosyl-L-methionine = 4-amino-2-methyl-5-(phosphooxymethyl)pyrimidine + CO + 5'-deoxyadenosine + formate + L-methionine + 3 H(+)</text>
        <dbReference type="Rhea" id="RHEA:24840"/>
        <dbReference type="ChEBI" id="CHEBI:15378"/>
        <dbReference type="ChEBI" id="CHEBI:15740"/>
        <dbReference type="ChEBI" id="CHEBI:17245"/>
        <dbReference type="ChEBI" id="CHEBI:17319"/>
        <dbReference type="ChEBI" id="CHEBI:57844"/>
        <dbReference type="ChEBI" id="CHEBI:58354"/>
        <dbReference type="ChEBI" id="CHEBI:59789"/>
        <dbReference type="ChEBI" id="CHEBI:137981"/>
        <dbReference type="EC" id="4.1.99.17"/>
    </reaction>
</comment>
<comment type="cofactor">
    <cofactor evidence="1">
        <name>[4Fe-4S] cluster</name>
        <dbReference type="ChEBI" id="CHEBI:49883"/>
    </cofactor>
    <text evidence="1">Binds 1 [4Fe-4S] cluster per subunit. The cluster is coordinated with 3 cysteines and an exchangeable S-adenosyl-L-methionine.</text>
</comment>
<comment type="pathway">
    <text evidence="1">Cofactor biosynthesis; thiamine diphosphate biosynthesis.</text>
</comment>
<comment type="subunit">
    <text evidence="1">Homodimer.</text>
</comment>
<comment type="similarity">
    <text evidence="1">Belongs to the ThiC family.</text>
</comment>
<protein>
    <recommendedName>
        <fullName evidence="1">Phosphomethylpyrimidine synthase</fullName>
        <ecNumber evidence="1">4.1.99.17</ecNumber>
    </recommendedName>
    <alternativeName>
        <fullName evidence="1">Hydroxymethylpyrimidine phosphate synthase</fullName>
        <shortName evidence="1">HMP-P synthase</shortName>
        <shortName evidence="1">HMP-phosphate synthase</shortName>
        <shortName evidence="1">HMPP synthase</shortName>
    </alternativeName>
    <alternativeName>
        <fullName evidence="1">Thiamine biosynthesis protein ThiC</fullName>
    </alternativeName>
</protein>
<dbReference type="EC" id="4.1.99.17" evidence="1"/>
<dbReference type="EMBL" id="CP001131">
    <property type="protein sequence ID" value="ACG73443.1"/>
    <property type="molecule type" value="Genomic_DNA"/>
</dbReference>
<dbReference type="RefSeq" id="WP_012526242.1">
    <property type="nucleotide sequence ID" value="NC_011145.1"/>
</dbReference>
<dbReference type="SMR" id="B4UDM7"/>
<dbReference type="KEGG" id="ank:AnaeK_2216"/>
<dbReference type="HOGENOM" id="CLU_013181_2_2_7"/>
<dbReference type="OrthoDB" id="9805897at2"/>
<dbReference type="UniPathway" id="UPA00060"/>
<dbReference type="Proteomes" id="UP000001871">
    <property type="component" value="Chromosome"/>
</dbReference>
<dbReference type="GO" id="GO:0005829">
    <property type="term" value="C:cytosol"/>
    <property type="evidence" value="ECO:0007669"/>
    <property type="project" value="TreeGrafter"/>
</dbReference>
<dbReference type="GO" id="GO:0051539">
    <property type="term" value="F:4 iron, 4 sulfur cluster binding"/>
    <property type="evidence" value="ECO:0007669"/>
    <property type="project" value="UniProtKB-KW"/>
</dbReference>
<dbReference type="GO" id="GO:0016830">
    <property type="term" value="F:carbon-carbon lyase activity"/>
    <property type="evidence" value="ECO:0007669"/>
    <property type="project" value="InterPro"/>
</dbReference>
<dbReference type="GO" id="GO:0008270">
    <property type="term" value="F:zinc ion binding"/>
    <property type="evidence" value="ECO:0007669"/>
    <property type="project" value="UniProtKB-UniRule"/>
</dbReference>
<dbReference type="GO" id="GO:0009228">
    <property type="term" value="P:thiamine biosynthetic process"/>
    <property type="evidence" value="ECO:0007669"/>
    <property type="project" value="UniProtKB-KW"/>
</dbReference>
<dbReference type="GO" id="GO:0009229">
    <property type="term" value="P:thiamine diphosphate biosynthetic process"/>
    <property type="evidence" value="ECO:0007669"/>
    <property type="project" value="UniProtKB-UniRule"/>
</dbReference>
<dbReference type="FunFam" id="3.20.20.540:FF:000001">
    <property type="entry name" value="Phosphomethylpyrimidine synthase"/>
    <property type="match status" value="1"/>
</dbReference>
<dbReference type="Gene3D" id="6.10.250.620">
    <property type="match status" value="1"/>
</dbReference>
<dbReference type="Gene3D" id="3.20.20.540">
    <property type="entry name" value="Radical SAM ThiC family, central domain"/>
    <property type="match status" value="1"/>
</dbReference>
<dbReference type="HAMAP" id="MF_00089">
    <property type="entry name" value="ThiC"/>
    <property type="match status" value="1"/>
</dbReference>
<dbReference type="InterPro" id="IPR037509">
    <property type="entry name" value="ThiC"/>
</dbReference>
<dbReference type="InterPro" id="IPR038521">
    <property type="entry name" value="ThiC/Bza_core_dom"/>
</dbReference>
<dbReference type="InterPro" id="IPR002817">
    <property type="entry name" value="ThiC/BzaA/B"/>
</dbReference>
<dbReference type="NCBIfam" id="NF006763">
    <property type="entry name" value="PRK09284.1"/>
    <property type="match status" value="1"/>
</dbReference>
<dbReference type="NCBIfam" id="NF009895">
    <property type="entry name" value="PRK13352.1"/>
    <property type="match status" value="1"/>
</dbReference>
<dbReference type="NCBIfam" id="TIGR00190">
    <property type="entry name" value="thiC"/>
    <property type="match status" value="1"/>
</dbReference>
<dbReference type="PANTHER" id="PTHR30557:SF1">
    <property type="entry name" value="PHOSPHOMETHYLPYRIMIDINE SYNTHASE, CHLOROPLASTIC"/>
    <property type="match status" value="1"/>
</dbReference>
<dbReference type="PANTHER" id="PTHR30557">
    <property type="entry name" value="THIAMINE BIOSYNTHESIS PROTEIN THIC"/>
    <property type="match status" value="1"/>
</dbReference>
<dbReference type="Pfam" id="PF01964">
    <property type="entry name" value="ThiC_Rad_SAM"/>
    <property type="match status" value="1"/>
</dbReference>
<dbReference type="SFLD" id="SFLDF00407">
    <property type="entry name" value="phosphomethylpyrimidine_syntha"/>
    <property type="match status" value="1"/>
</dbReference>
<dbReference type="SFLD" id="SFLDG01114">
    <property type="entry name" value="phosphomethylpyrimidine_syntha"/>
    <property type="match status" value="1"/>
</dbReference>
<dbReference type="SFLD" id="SFLDS00113">
    <property type="entry name" value="Radical_SAM_Phosphomethylpyrim"/>
    <property type="match status" value="1"/>
</dbReference>
<name>THIC_ANASK</name>
<proteinExistence type="inferred from homology"/>
<organism>
    <name type="scientific">Anaeromyxobacter sp. (strain K)</name>
    <dbReference type="NCBI Taxonomy" id="447217"/>
    <lineage>
        <taxon>Bacteria</taxon>
        <taxon>Pseudomonadati</taxon>
        <taxon>Myxococcota</taxon>
        <taxon>Myxococcia</taxon>
        <taxon>Myxococcales</taxon>
        <taxon>Cystobacterineae</taxon>
        <taxon>Anaeromyxobacteraceae</taxon>
        <taxon>Anaeromyxobacter</taxon>
    </lineage>
</organism>